<keyword id="KW-0687">Ribonucleoprotein</keyword>
<keyword id="KW-0689">Ribosomal protein</keyword>
<comment type="similarity">
    <text evidence="1">Belongs to the bacterial ribosomal protein bL32 family.</text>
</comment>
<proteinExistence type="inferred from homology"/>
<sequence>MAVPKRKTSPSKRGMRRSADALKAPTYIEDKNSGELRRPHHIDLKTGMYRGRSVLPAKD</sequence>
<reference key="1">
    <citation type="journal article" date="2004" name="Proc. Natl. Acad. Sci. U.S.A.">
        <title>The louse-borne human pathogen Bartonella quintana is a genomic derivative of the zoonotic agent Bartonella henselae.</title>
        <authorList>
            <person name="Alsmark U.C.M."/>
            <person name="Frank A.C."/>
            <person name="Karlberg E.O."/>
            <person name="Legault B.-A."/>
            <person name="Ardell D.H."/>
            <person name="Canbaeck B."/>
            <person name="Eriksson A.-S."/>
            <person name="Naeslund A.K."/>
            <person name="Handley S.A."/>
            <person name="Huvet M."/>
            <person name="La Scola B."/>
            <person name="Holmberg M."/>
            <person name="Andersson S.G.E."/>
        </authorList>
    </citation>
    <scope>NUCLEOTIDE SEQUENCE [LARGE SCALE GENOMIC DNA]</scope>
    <source>
        <strain>ATCC 49882 / DSM 28221 / CCUG 30454 / Houston 1</strain>
    </source>
</reference>
<dbReference type="EMBL" id="BX897699">
    <property type="protein sequence ID" value="CAF28288.1"/>
    <property type="molecule type" value="Genomic_DNA"/>
</dbReference>
<dbReference type="RefSeq" id="WP_011181291.1">
    <property type="nucleotide sequence ID" value="NZ_LRIJ02000001.1"/>
</dbReference>
<dbReference type="SMR" id="Q6G1X6"/>
<dbReference type="PaxDb" id="283166-BH15250"/>
<dbReference type="EnsemblBacteria" id="CAF28288">
    <property type="protein sequence ID" value="CAF28288"/>
    <property type="gene ID" value="BH15250"/>
</dbReference>
<dbReference type="GeneID" id="92986139"/>
<dbReference type="KEGG" id="bhe:BH15250"/>
<dbReference type="eggNOG" id="COG0333">
    <property type="taxonomic scope" value="Bacteria"/>
</dbReference>
<dbReference type="OrthoDB" id="9801927at2"/>
<dbReference type="Proteomes" id="UP000000421">
    <property type="component" value="Chromosome"/>
</dbReference>
<dbReference type="GO" id="GO:0015934">
    <property type="term" value="C:large ribosomal subunit"/>
    <property type="evidence" value="ECO:0007669"/>
    <property type="project" value="InterPro"/>
</dbReference>
<dbReference type="GO" id="GO:0003735">
    <property type="term" value="F:structural constituent of ribosome"/>
    <property type="evidence" value="ECO:0007669"/>
    <property type="project" value="InterPro"/>
</dbReference>
<dbReference type="GO" id="GO:0006412">
    <property type="term" value="P:translation"/>
    <property type="evidence" value="ECO:0007669"/>
    <property type="project" value="UniProtKB-UniRule"/>
</dbReference>
<dbReference type="Gene3D" id="1.20.5.640">
    <property type="entry name" value="Single helix bin"/>
    <property type="match status" value="1"/>
</dbReference>
<dbReference type="HAMAP" id="MF_00340">
    <property type="entry name" value="Ribosomal_bL32"/>
    <property type="match status" value="1"/>
</dbReference>
<dbReference type="InterPro" id="IPR002677">
    <property type="entry name" value="Ribosomal_bL32"/>
</dbReference>
<dbReference type="InterPro" id="IPR044957">
    <property type="entry name" value="Ribosomal_bL32_bact"/>
</dbReference>
<dbReference type="InterPro" id="IPR011332">
    <property type="entry name" value="Ribosomal_zn-bd"/>
</dbReference>
<dbReference type="NCBIfam" id="TIGR01031">
    <property type="entry name" value="rpmF_bact"/>
    <property type="match status" value="1"/>
</dbReference>
<dbReference type="PANTHER" id="PTHR35534">
    <property type="entry name" value="50S RIBOSOMAL PROTEIN L32"/>
    <property type="match status" value="1"/>
</dbReference>
<dbReference type="PANTHER" id="PTHR35534:SF1">
    <property type="entry name" value="LARGE RIBOSOMAL SUBUNIT PROTEIN BL32"/>
    <property type="match status" value="1"/>
</dbReference>
<dbReference type="Pfam" id="PF01783">
    <property type="entry name" value="Ribosomal_L32p"/>
    <property type="match status" value="1"/>
</dbReference>
<dbReference type="SUPFAM" id="SSF57829">
    <property type="entry name" value="Zn-binding ribosomal proteins"/>
    <property type="match status" value="1"/>
</dbReference>
<name>RL32_BARHE</name>
<gene>
    <name evidence="1" type="primary">rpmF</name>
    <name type="ordered locus">BH15250</name>
</gene>
<accession>Q6G1X6</accession>
<feature type="chain" id="PRO_0000172308" description="Large ribosomal subunit protein bL32">
    <location>
        <begin position="1"/>
        <end position="59"/>
    </location>
</feature>
<feature type="region of interest" description="Disordered" evidence="2">
    <location>
        <begin position="1"/>
        <end position="41"/>
    </location>
</feature>
<feature type="compositionally biased region" description="Basic residues" evidence="2">
    <location>
        <begin position="1"/>
        <end position="16"/>
    </location>
</feature>
<feature type="compositionally biased region" description="Basic and acidic residues" evidence="2">
    <location>
        <begin position="28"/>
        <end position="41"/>
    </location>
</feature>
<evidence type="ECO:0000255" key="1">
    <source>
        <dbReference type="HAMAP-Rule" id="MF_00340"/>
    </source>
</evidence>
<evidence type="ECO:0000256" key="2">
    <source>
        <dbReference type="SAM" id="MobiDB-lite"/>
    </source>
</evidence>
<evidence type="ECO:0000305" key="3"/>
<protein>
    <recommendedName>
        <fullName evidence="1">Large ribosomal subunit protein bL32</fullName>
    </recommendedName>
    <alternativeName>
        <fullName evidence="3">50S ribosomal protein L32</fullName>
    </alternativeName>
</protein>
<organism>
    <name type="scientific">Bartonella henselae (strain ATCC 49882 / DSM 28221 / CCUG 30454 / Houston 1)</name>
    <name type="common">Rochalimaea henselae</name>
    <dbReference type="NCBI Taxonomy" id="283166"/>
    <lineage>
        <taxon>Bacteria</taxon>
        <taxon>Pseudomonadati</taxon>
        <taxon>Pseudomonadota</taxon>
        <taxon>Alphaproteobacteria</taxon>
        <taxon>Hyphomicrobiales</taxon>
        <taxon>Bartonellaceae</taxon>
        <taxon>Bartonella</taxon>
    </lineage>
</organism>